<protein>
    <recommendedName>
        <fullName evidence="1">Peptide deformylase-like</fullName>
    </recommendedName>
    <alternativeName>
        <fullName evidence="1">Polypeptide deformylase-like</fullName>
    </alternativeName>
</protein>
<comment type="similarity">
    <text evidence="1">Belongs to the polypeptide deformylase family.</text>
</comment>
<comment type="sequence caution" evidence="2">
    <conflict type="erroneous initiation">
        <sequence resource="EMBL-CDS" id="AAL54054"/>
    </conflict>
</comment>
<proteinExistence type="inferred from homology"/>
<sequence>MTVRLIVKYPDPRLRAAAEPVTTFDEGLRKLADDLLDTMRAAPGIGITAPHIGISKRVVVLELDRAAGPKIYINPEIVWACEEKIRHQEGSVSMPGVVDEVERHARIRLRYQDLDGNEQTEESDGLLAVCHQHEIDQLDGIFWVQRLSRLRRERLIKRYEKLQR</sequence>
<reference key="1">
    <citation type="journal article" date="2002" name="Proc. Natl. Acad. Sci. U.S.A.">
        <title>The genome sequence of the facultative intracellular pathogen Brucella melitensis.</title>
        <authorList>
            <person name="DelVecchio V.G."/>
            <person name="Kapatral V."/>
            <person name="Redkar R.J."/>
            <person name="Patra G."/>
            <person name="Mujer C."/>
            <person name="Los T."/>
            <person name="Ivanova N."/>
            <person name="Anderson I."/>
            <person name="Bhattacharyya A."/>
            <person name="Lykidis A."/>
            <person name="Reznik G."/>
            <person name="Jablonski L."/>
            <person name="Larsen N."/>
            <person name="D'Souza M."/>
            <person name="Bernal A."/>
            <person name="Mazur M."/>
            <person name="Goltsman E."/>
            <person name="Selkov E."/>
            <person name="Elzer P.H."/>
            <person name="Hagius S."/>
            <person name="O'Callaghan D."/>
            <person name="Letesson J.-J."/>
            <person name="Haselkorn R."/>
            <person name="Kyrpides N.C."/>
            <person name="Overbeek R."/>
        </authorList>
    </citation>
    <scope>NUCLEOTIDE SEQUENCE [LARGE SCALE GENOMIC DNA]</scope>
    <source>
        <strain>ATCC 23456 / CCUG 17765 / NCTC 10094 / 16M</strain>
    </source>
</reference>
<accession>P63919</accession>
<accession>Q8YBS4</accession>
<evidence type="ECO:0000255" key="1">
    <source>
        <dbReference type="HAMAP-Rule" id="MF_00163"/>
    </source>
</evidence>
<evidence type="ECO:0000305" key="2"/>
<feature type="chain" id="PRO_0000082892" description="Peptide deformylase-like">
    <location>
        <begin position="1"/>
        <end position="164"/>
    </location>
</feature>
<feature type="active site" evidence="1">
    <location>
        <position position="134"/>
    </location>
</feature>
<organism>
    <name type="scientific">Brucella melitensis biotype 1 (strain ATCC 23456 / CCUG 17765 / NCTC 10094 / 16M)</name>
    <dbReference type="NCBI Taxonomy" id="224914"/>
    <lineage>
        <taxon>Bacteria</taxon>
        <taxon>Pseudomonadati</taxon>
        <taxon>Pseudomonadota</taxon>
        <taxon>Alphaproteobacteria</taxon>
        <taxon>Hyphomicrobiales</taxon>
        <taxon>Brucellaceae</taxon>
        <taxon>Brucella/Ochrobactrum group</taxon>
        <taxon>Brucella</taxon>
    </lineage>
</organism>
<name>DEFL_BRUME</name>
<dbReference type="EMBL" id="AE008918">
    <property type="protein sequence ID" value="AAL54054.1"/>
    <property type="status" value="ALT_INIT"/>
    <property type="molecule type" value="Genomic_DNA"/>
</dbReference>
<dbReference type="PIR" id="AC3611">
    <property type="entry name" value="AC3611"/>
</dbReference>
<dbReference type="RefSeq" id="WP_002966173.1">
    <property type="nucleotide sequence ID" value="NZ_GG703779.1"/>
</dbReference>
<dbReference type="SMR" id="P63919"/>
<dbReference type="KEGG" id="bme:BMEII0812"/>
<dbReference type="KEGG" id="bmel:DK63_2436"/>
<dbReference type="PATRIC" id="fig|224914.52.peg.2554"/>
<dbReference type="eggNOG" id="COG0242">
    <property type="taxonomic scope" value="Bacteria"/>
</dbReference>
<dbReference type="Proteomes" id="UP000000419">
    <property type="component" value="Chromosome II"/>
</dbReference>
<dbReference type="GO" id="GO:0042586">
    <property type="term" value="F:peptide deformylase activity"/>
    <property type="evidence" value="ECO:0007669"/>
    <property type="project" value="UniProtKB-UniRule"/>
</dbReference>
<dbReference type="GO" id="GO:0043686">
    <property type="term" value="P:co-translational protein modification"/>
    <property type="evidence" value="ECO:0007669"/>
    <property type="project" value="TreeGrafter"/>
</dbReference>
<dbReference type="GO" id="GO:0006412">
    <property type="term" value="P:translation"/>
    <property type="evidence" value="ECO:0007669"/>
    <property type="project" value="UniProtKB-UniRule"/>
</dbReference>
<dbReference type="CDD" id="cd00487">
    <property type="entry name" value="Pep_deformylase"/>
    <property type="match status" value="1"/>
</dbReference>
<dbReference type="Gene3D" id="3.90.45.10">
    <property type="entry name" value="Peptide deformylase"/>
    <property type="match status" value="1"/>
</dbReference>
<dbReference type="HAMAP" id="MF_00163">
    <property type="entry name" value="Pep_deformylase"/>
    <property type="match status" value="1"/>
</dbReference>
<dbReference type="InterPro" id="IPR023635">
    <property type="entry name" value="Peptide_deformylase"/>
</dbReference>
<dbReference type="InterPro" id="IPR036821">
    <property type="entry name" value="Peptide_deformylase_sf"/>
</dbReference>
<dbReference type="NCBIfam" id="TIGR00079">
    <property type="entry name" value="pept_deformyl"/>
    <property type="match status" value="1"/>
</dbReference>
<dbReference type="NCBIfam" id="NF001159">
    <property type="entry name" value="PRK00150.1-3"/>
    <property type="match status" value="1"/>
</dbReference>
<dbReference type="NCBIfam" id="NF009484">
    <property type="entry name" value="PRK12846.1-5"/>
    <property type="match status" value="1"/>
</dbReference>
<dbReference type="PANTHER" id="PTHR10458">
    <property type="entry name" value="PEPTIDE DEFORMYLASE"/>
    <property type="match status" value="1"/>
</dbReference>
<dbReference type="PANTHER" id="PTHR10458:SF22">
    <property type="entry name" value="PEPTIDE DEFORMYLASE"/>
    <property type="match status" value="1"/>
</dbReference>
<dbReference type="Pfam" id="PF01327">
    <property type="entry name" value="Pep_deformylase"/>
    <property type="match status" value="1"/>
</dbReference>
<dbReference type="PIRSF" id="PIRSF004749">
    <property type="entry name" value="Pep_def"/>
    <property type="match status" value="1"/>
</dbReference>
<dbReference type="PRINTS" id="PR01576">
    <property type="entry name" value="PDEFORMYLASE"/>
</dbReference>
<dbReference type="SUPFAM" id="SSF56420">
    <property type="entry name" value="Peptide deformylase"/>
    <property type="match status" value="1"/>
</dbReference>
<gene>
    <name type="ordered locus">BMEII0812</name>
</gene>